<sequence>MPELPEVETVRRGLQPFMEGATVVRVEQNRPDLRFAFPENFAERLSGRRIEALGRRAKYLTVHLDDGLSIISHLGMSGSFRIEAEDAQGLPGGFHHERSKNSLHDHVVFHLMRPDGASARIIYNDPRRFGFMLFAEKGALEEHPLLKDLGVEPTGNLLSGEVLAALFKGRRKPLKAALLDQRLIAGLGNIYVCEALWRAGLSPMRAAGSVAGEMDVMERLAGAIRSVIAQAIAAGGSSLKDYIQADGALGYFQHSFSVYGREGKPCRNPACGGTVERVVQSGRSTFFCASCQT</sequence>
<protein>
    <recommendedName>
        <fullName evidence="2">Formamidopyrimidine-DNA glycosylase</fullName>
        <shortName evidence="2">Fapy-DNA glycosylase</shortName>
        <ecNumber evidence="2">3.2.2.23</ecNumber>
    </recommendedName>
    <alternativeName>
        <fullName evidence="2">DNA-(apurinic or apyrimidinic site) lyase MutM</fullName>
        <shortName evidence="2">AP lyase MutM</shortName>
        <ecNumber evidence="2">4.2.99.18</ecNumber>
    </alternativeName>
</protein>
<comment type="function">
    <text evidence="2">Involved in base excision repair of DNA damaged by oxidation or by mutagenic agents. Acts as a DNA glycosylase that recognizes and removes damaged bases. Has a preference for oxidized purines, such as 7,8-dihydro-8-oxoguanine (8-oxoG). Has AP (apurinic/apyrimidinic) lyase activity and introduces nicks in the DNA strand. Cleaves the DNA backbone by beta-delta elimination to generate a single-strand break at the site of the removed base with both 3'- and 5'-phosphates.</text>
</comment>
<comment type="catalytic activity">
    <reaction evidence="2">
        <text>Hydrolysis of DNA containing ring-opened 7-methylguanine residues, releasing 2,6-diamino-4-hydroxy-5-(N-methyl)formamidopyrimidine.</text>
        <dbReference type="EC" id="3.2.2.23"/>
    </reaction>
</comment>
<comment type="catalytic activity">
    <reaction evidence="2">
        <text>2'-deoxyribonucleotide-(2'-deoxyribose 5'-phosphate)-2'-deoxyribonucleotide-DNA = a 3'-end 2'-deoxyribonucleotide-(2,3-dehydro-2,3-deoxyribose 5'-phosphate)-DNA + a 5'-end 5'-phospho-2'-deoxyribonucleoside-DNA + H(+)</text>
        <dbReference type="Rhea" id="RHEA:66592"/>
        <dbReference type="Rhea" id="RHEA-COMP:13180"/>
        <dbReference type="Rhea" id="RHEA-COMP:16897"/>
        <dbReference type="Rhea" id="RHEA-COMP:17067"/>
        <dbReference type="ChEBI" id="CHEBI:15378"/>
        <dbReference type="ChEBI" id="CHEBI:136412"/>
        <dbReference type="ChEBI" id="CHEBI:157695"/>
        <dbReference type="ChEBI" id="CHEBI:167181"/>
        <dbReference type="EC" id="4.2.99.18"/>
    </reaction>
</comment>
<comment type="cofactor">
    <cofactor evidence="2">
        <name>Zn(2+)</name>
        <dbReference type="ChEBI" id="CHEBI:29105"/>
    </cofactor>
    <text evidence="2">Binds 1 zinc ion per subunit.</text>
</comment>
<comment type="subunit">
    <text evidence="2">Monomer.</text>
</comment>
<comment type="similarity">
    <text evidence="2">Belongs to the FPG family.</text>
</comment>
<gene>
    <name evidence="2" type="primary">mutM</name>
    <name evidence="2" type="synonym">fpg</name>
    <name type="ordered locus">BCAN_A2225</name>
</gene>
<keyword id="KW-0227">DNA damage</keyword>
<keyword id="KW-0234">DNA repair</keyword>
<keyword id="KW-0238">DNA-binding</keyword>
<keyword id="KW-0326">Glycosidase</keyword>
<keyword id="KW-0378">Hydrolase</keyword>
<keyword id="KW-0456">Lyase</keyword>
<keyword id="KW-0479">Metal-binding</keyword>
<keyword id="KW-0511">Multifunctional enzyme</keyword>
<keyword id="KW-1185">Reference proteome</keyword>
<keyword id="KW-0862">Zinc</keyword>
<keyword id="KW-0863">Zinc-finger</keyword>
<accession>A9MAB2</accession>
<name>FPG_BRUC2</name>
<reference key="1">
    <citation type="submission" date="2007-10" db="EMBL/GenBank/DDBJ databases">
        <title>Brucella canis ATCC 23365 whole genome shotgun sequencing project.</title>
        <authorList>
            <person name="Setubal J.C."/>
            <person name="Bowns C."/>
            <person name="Boyle S."/>
            <person name="Crasta O.R."/>
            <person name="Czar M.J."/>
            <person name="Dharmanolla C."/>
            <person name="Gillespie J.J."/>
            <person name="Kenyon R.W."/>
            <person name="Lu J."/>
            <person name="Mane S."/>
            <person name="Mohapatra S."/>
            <person name="Nagrani S."/>
            <person name="Purkayastha A."/>
            <person name="Rajasimha H.K."/>
            <person name="Shallom J.M."/>
            <person name="Shallom S."/>
            <person name="Shukla M."/>
            <person name="Snyder E.E."/>
            <person name="Sobral B.W."/>
            <person name="Wattam A.R."/>
            <person name="Will R."/>
            <person name="Williams K."/>
            <person name="Yoo H."/>
            <person name="Bruce D."/>
            <person name="Detter C."/>
            <person name="Munk C."/>
            <person name="Brettin T.S."/>
        </authorList>
    </citation>
    <scope>NUCLEOTIDE SEQUENCE [LARGE SCALE GENOMIC DNA]</scope>
    <source>
        <strain>ATCC 23365 / NCTC 10854 / RM-666</strain>
    </source>
</reference>
<organism>
    <name type="scientific">Brucella canis (strain ATCC 23365 / NCTC 10854 / RM-666)</name>
    <dbReference type="NCBI Taxonomy" id="483179"/>
    <lineage>
        <taxon>Bacteria</taxon>
        <taxon>Pseudomonadati</taxon>
        <taxon>Pseudomonadota</taxon>
        <taxon>Alphaproteobacteria</taxon>
        <taxon>Hyphomicrobiales</taxon>
        <taxon>Brucellaceae</taxon>
        <taxon>Brucella/Ochrobactrum group</taxon>
        <taxon>Brucella</taxon>
    </lineage>
</organism>
<proteinExistence type="inferred from homology"/>
<evidence type="ECO:0000250" key="1"/>
<evidence type="ECO:0000255" key="2">
    <source>
        <dbReference type="HAMAP-Rule" id="MF_00103"/>
    </source>
</evidence>
<feature type="initiator methionine" description="Removed" evidence="1">
    <location>
        <position position="1"/>
    </location>
</feature>
<feature type="chain" id="PRO_1000075693" description="Formamidopyrimidine-DNA glycosylase">
    <location>
        <begin position="2"/>
        <end position="293"/>
    </location>
</feature>
<feature type="zinc finger region" description="FPG-type" evidence="2">
    <location>
        <begin position="257"/>
        <end position="293"/>
    </location>
</feature>
<feature type="active site" description="Schiff-base intermediate with DNA" evidence="2">
    <location>
        <position position="2"/>
    </location>
</feature>
<feature type="active site" description="Proton donor" evidence="2">
    <location>
        <position position="3"/>
    </location>
</feature>
<feature type="active site" description="Proton donor; for beta-elimination activity" evidence="2">
    <location>
        <position position="58"/>
    </location>
</feature>
<feature type="active site" description="Proton donor; for delta-elimination activity" evidence="2">
    <location>
        <position position="283"/>
    </location>
</feature>
<feature type="binding site" evidence="2">
    <location>
        <position position="104"/>
    </location>
    <ligand>
        <name>DNA</name>
        <dbReference type="ChEBI" id="CHEBI:16991"/>
    </ligand>
</feature>
<feature type="binding site" evidence="2">
    <location>
        <position position="127"/>
    </location>
    <ligand>
        <name>DNA</name>
        <dbReference type="ChEBI" id="CHEBI:16991"/>
    </ligand>
</feature>
<feature type="binding site" evidence="2">
    <location>
        <position position="170"/>
    </location>
    <ligand>
        <name>DNA</name>
        <dbReference type="ChEBI" id="CHEBI:16991"/>
    </ligand>
</feature>
<dbReference type="EC" id="3.2.2.23" evidence="2"/>
<dbReference type="EC" id="4.2.99.18" evidence="2"/>
<dbReference type="EMBL" id="CP000872">
    <property type="protein sequence ID" value="ABX63207.1"/>
    <property type="molecule type" value="Genomic_DNA"/>
</dbReference>
<dbReference type="RefSeq" id="WP_004691191.1">
    <property type="nucleotide sequence ID" value="NC_010103.1"/>
</dbReference>
<dbReference type="SMR" id="A9MAB2"/>
<dbReference type="GeneID" id="55591744"/>
<dbReference type="KEGG" id="bcs:BCAN_A2225"/>
<dbReference type="HOGENOM" id="CLU_038423_1_1_5"/>
<dbReference type="PhylomeDB" id="A9MAB2"/>
<dbReference type="PRO" id="PR:A9MAB2"/>
<dbReference type="Proteomes" id="UP000001385">
    <property type="component" value="Chromosome I"/>
</dbReference>
<dbReference type="GO" id="GO:0034039">
    <property type="term" value="F:8-oxo-7,8-dihydroguanine DNA N-glycosylase activity"/>
    <property type="evidence" value="ECO:0007669"/>
    <property type="project" value="TreeGrafter"/>
</dbReference>
<dbReference type="GO" id="GO:0140078">
    <property type="term" value="F:class I DNA-(apurinic or apyrimidinic site) endonuclease activity"/>
    <property type="evidence" value="ECO:0007669"/>
    <property type="project" value="UniProtKB-EC"/>
</dbReference>
<dbReference type="GO" id="GO:0003684">
    <property type="term" value="F:damaged DNA binding"/>
    <property type="evidence" value="ECO:0007669"/>
    <property type="project" value="InterPro"/>
</dbReference>
<dbReference type="GO" id="GO:0008270">
    <property type="term" value="F:zinc ion binding"/>
    <property type="evidence" value="ECO:0007669"/>
    <property type="project" value="UniProtKB-UniRule"/>
</dbReference>
<dbReference type="GO" id="GO:0006284">
    <property type="term" value="P:base-excision repair"/>
    <property type="evidence" value="ECO:0007669"/>
    <property type="project" value="InterPro"/>
</dbReference>
<dbReference type="CDD" id="cd08966">
    <property type="entry name" value="EcFpg-like_N"/>
    <property type="match status" value="1"/>
</dbReference>
<dbReference type="FunFam" id="1.10.8.50:FF:000003">
    <property type="entry name" value="Formamidopyrimidine-DNA glycosylase"/>
    <property type="match status" value="1"/>
</dbReference>
<dbReference type="Gene3D" id="1.10.8.50">
    <property type="match status" value="1"/>
</dbReference>
<dbReference type="Gene3D" id="3.20.190.10">
    <property type="entry name" value="MutM-like, N-terminal"/>
    <property type="match status" value="1"/>
</dbReference>
<dbReference type="HAMAP" id="MF_00103">
    <property type="entry name" value="Fapy_DNA_glycosyl"/>
    <property type="match status" value="1"/>
</dbReference>
<dbReference type="InterPro" id="IPR015886">
    <property type="entry name" value="DNA_glyclase/AP_lyase_DNA-bd"/>
</dbReference>
<dbReference type="InterPro" id="IPR015887">
    <property type="entry name" value="DNA_glyclase_Znf_dom_DNA_BS"/>
</dbReference>
<dbReference type="InterPro" id="IPR020629">
    <property type="entry name" value="Formamido-pyr_DNA_Glyclase"/>
</dbReference>
<dbReference type="InterPro" id="IPR012319">
    <property type="entry name" value="FPG_cat"/>
</dbReference>
<dbReference type="InterPro" id="IPR035937">
    <property type="entry name" value="MutM-like_N-ter"/>
</dbReference>
<dbReference type="InterPro" id="IPR010979">
    <property type="entry name" value="Ribosomal_uS13-like_H2TH"/>
</dbReference>
<dbReference type="InterPro" id="IPR000214">
    <property type="entry name" value="Znf_DNA_glyclase/AP_lyase"/>
</dbReference>
<dbReference type="InterPro" id="IPR010663">
    <property type="entry name" value="Znf_FPG/IleRS"/>
</dbReference>
<dbReference type="NCBIfam" id="TIGR00577">
    <property type="entry name" value="fpg"/>
    <property type="match status" value="1"/>
</dbReference>
<dbReference type="NCBIfam" id="NF002211">
    <property type="entry name" value="PRK01103.1"/>
    <property type="match status" value="1"/>
</dbReference>
<dbReference type="PANTHER" id="PTHR22993">
    <property type="entry name" value="FORMAMIDOPYRIMIDINE-DNA GLYCOSYLASE"/>
    <property type="match status" value="1"/>
</dbReference>
<dbReference type="PANTHER" id="PTHR22993:SF9">
    <property type="entry name" value="FORMAMIDOPYRIMIDINE-DNA GLYCOSYLASE"/>
    <property type="match status" value="1"/>
</dbReference>
<dbReference type="Pfam" id="PF01149">
    <property type="entry name" value="Fapy_DNA_glyco"/>
    <property type="match status" value="1"/>
</dbReference>
<dbReference type="Pfam" id="PF06831">
    <property type="entry name" value="H2TH"/>
    <property type="match status" value="1"/>
</dbReference>
<dbReference type="Pfam" id="PF06827">
    <property type="entry name" value="zf-FPG_IleRS"/>
    <property type="match status" value="1"/>
</dbReference>
<dbReference type="SMART" id="SM00898">
    <property type="entry name" value="Fapy_DNA_glyco"/>
    <property type="match status" value="1"/>
</dbReference>
<dbReference type="SMART" id="SM01232">
    <property type="entry name" value="H2TH"/>
    <property type="match status" value="1"/>
</dbReference>
<dbReference type="SUPFAM" id="SSF57716">
    <property type="entry name" value="Glucocorticoid receptor-like (DNA-binding domain)"/>
    <property type="match status" value="1"/>
</dbReference>
<dbReference type="SUPFAM" id="SSF81624">
    <property type="entry name" value="N-terminal domain of MutM-like DNA repair proteins"/>
    <property type="match status" value="1"/>
</dbReference>
<dbReference type="SUPFAM" id="SSF46946">
    <property type="entry name" value="S13-like H2TH domain"/>
    <property type="match status" value="1"/>
</dbReference>
<dbReference type="PROSITE" id="PS51068">
    <property type="entry name" value="FPG_CAT"/>
    <property type="match status" value="1"/>
</dbReference>
<dbReference type="PROSITE" id="PS01242">
    <property type="entry name" value="ZF_FPG_1"/>
    <property type="match status" value="1"/>
</dbReference>
<dbReference type="PROSITE" id="PS51066">
    <property type="entry name" value="ZF_FPG_2"/>
    <property type="match status" value="1"/>
</dbReference>